<protein>
    <recommendedName>
        <fullName evidence="1">DNA-directed RNA polymerase subunit Rpo3</fullName>
        <ecNumber evidence="1">2.7.7.6</ecNumber>
    </recommendedName>
    <alternativeName>
        <fullName evidence="1">DNA-directed RNA polymerase subunit D</fullName>
    </alternativeName>
</protein>
<name>RPO3_PYRHO</name>
<organism>
    <name type="scientific">Pyrococcus horikoshii (strain ATCC 700860 / DSM 12428 / JCM 9974 / NBRC 100139 / OT-3)</name>
    <dbReference type="NCBI Taxonomy" id="70601"/>
    <lineage>
        <taxon>Archaea</taxon>
        <taxon>Methanobacteriati</taxon>
        <taxon>Methanobacteriota</taxon>
        <taxon>Thermococci</taxon>
        <taxon>Thermococcales</taxon>
        <taxon>Thermococcaceae</taxon>
        <taxon>Pyrococcus</taxon>
    </lineage>
</organism>
<accession>O59303</accession>
<comment type="function">
    <text evidence="1">DNA-dependent RNA polymerase (RNAP) catalyzes the transcription of DNA into RNA using the four ribonucleoside triphosphates as substrates.</text>
</comment>
<comment type="catalytic activity">
    <reaction evidence="1">
        <text>RNA(n) + a ribonucleoside 5'-triphosphate = RNA(n+1) + diphosphate</text>
        <dbReference type="Rhea" id="RHEA:21248"/>
        <dbReference type="Rhea" id="RHEA-COMP:14527"/>
        <dbReference type="Rhea" id="RHEA-COMP:17342"/>
        <dbReference type="ChEBI" id="CHEBI:33019"/>
        <dbReference type="ChEBI" id="CHEBI:61557"/>
        <dbReference type="ChEBI" id="CHEBI:140395"/>
        <dbReference type="EC" id="2.7.7.6"/>
    </reaction>
</comment>
<comment type="subunit">
    <text evidence="1">Part of the RNA polymerase complex.</text>
</comment>
<comment type="subcellular location">
    <subcellularLocation>
        <location evidence="1">Cytoplasm</location>
    </subcellularLocation>
</comment>
<comment type="similarity">
    <text evidence="1">Belongs to the archaeal Rpo3/eukaryotic RPB3 RNA polymerase subunit family.</text>
</comment>
<comment type="sequence caution" evidence="2">
    <conflict type="erroneous initiation">
        <sequence resource="EMBL-CDS" id="BAA30749"/>
    </conflict>
    <text>Extended N-terminus.</text>
</comment>
<evidence type="ECO:0000255" key="1">
    <source>
        <dbReference type="HAMAP-Rule" id="MF_00320"/>
    </source>
</evidence>
<evidence type="ECO:0000305" key="2"/>
<gene>
    <name evidence="1" type="primary">rpo3</name>
    <name evidence="1" type="synonym">rpoD</name>
    <name type="ordered locus">PH1637</name>
</gene>
<feature type="chain" id="PRO_0000132762" description="DNA-directed RNA polymerase subunit Rpo3">
    <location>
        <begin position="1"/>
        <end position="259"/>
    </location>
</feature>
<dbReference type="EC" id="2.7.7.6" evidence="1"/>
<dbReference type="EMBL" id="BA000001">
    <property type="protein sequence ID" value="BAA30749.1"/>
    <property type="status" value="ALT_INIT"/>
    <property type="molecule type" value="Genomic_DNA"/>
</dbReference>
<dbReference type="PIR" id="E71043">
    <property type="entry name" value="E71043"/>
</dbReference>
<dbReference type="RefSeq" id="WP_394295099.1">
    <property type="nucleotide sequence ID" value="NC_000961.1"/>
</dbReference>
<dbReference type="SMR" id="O59303"/>
<dbReference type="STRING" id="70601.gene:9378629"/>
<dbReference type="EnsemblBacteria" id="BAA30749">
    <property type="protein sequence ID" value="BAA30749"/>
    <property type="gene ID" value="BAA30749"/>
</dbReference>
<dbReference type="GeneID" id="1442487"/>
<dbReference type="KEGG" id="pho:PH1637"/>
<dbReference type="eggNOG" id="arCOG04241">
    <property type="taxonomic scope" value="Archaea"/>
</dbReference>
<dbReference type="OrthoDB" id="84933at2157"/>
<dbReference type="Proteomes" id="UP000000752">
    <property type="component" value="Chromosome"/>
</dbReference>
<dbReference type="GO" id="GO:0005737">
    <property type="term" value="C:cytoplasm"/>
    <property type="evidence" value="ECO:0007669"/>
    <property type="project" value="UniProtKB-SubCell"/>
</dbReference>
<dbReference type="GO" id="GO:0000428">
    <property type="term" value="C:DNA-directed RNA polymerase complex"/>
    <property type="evidence" value="ECO:0007669"/>
    <property type="project" value="UniProtKB-KW"/>
</dbReference>
<dbReference type="GO" id="GO:0003677">
    <property type="term" value="F:DNA binding"/>
    <property type="evidence" value="ECO:0007669"/>
    <property type="project" value="UniProtKB-UniRule"/>
</dbReference>
<dbReference type="GO" id="GO:0003899">
    <property type="term" value="F:DNA-directed RNA polymerase activity"/>
    <property type="evidence" value="ECO:0007669"/>
    <property type="project" value="UniProtKB-UniRule"/>
</dbReference>
<dbReference type="GO" id="GO:0046983">
    <property type="term" value="F:protein dimerization activity"/>
    <property type="evidence" value="ECO:0007669"/>
    <property type="project" value="InterPro"/>
</dbReference>
<dbReference type="GO" id="GO:0006351">
    <property type="term" value="P:DNA-templated transcription"/>
    <property type="evidence" value="ECO:0007669"/>
    <property type="project" value="UniProtKB-UniRule"/>
</dbReference>
<dbReference type="CDD" id="cd07030">
    <property type="entry name" value="RNAP_D"/>
    <property type="match status" value="1"/>
</dbReference>
<dbReference type="Gene3D" id="3.30.70.3110">
    <property type="match status" value="1"/>
</dbReference>
<dbReference type="Gene3D" id="2.170.120.12">
    <property type="entry name" value="DNA-directed RNA polymerase, insert domain"/>
    <property type="match status" value="1"/>
</dbReference>
<dbReference type="Gene3D" id="3.30.1360.10">
    <property type="entry name" value="RNA polymerase, RBP11-like subunit"/>
    <property type="match status" value="1"/>
</dbReference>
<dbReference type="HAMAP" id="MF_00320">
    <property type="entry name" value="RNApol_arch_Rpo3"/>
    <property type="match status" value="1"/>
</dbReference>
<dbReference type="InterPro" id="IPR001514">
    <property type="entry name" value="DNA-dir_RNA_pol_30-40kDasu_CS"/>
</dbReference>
<dbReference type="InterPro" id="IPR011262">
    <property type="entry name" value="DNA-dir_RNA_pol_insert"/>
</dbReference>
<dbReference type="InterPro" id="IPR011263">
    <property type="entry name" value="DNA-dir_RNA_pol_RpoA/D/Rpb3"/>
</dbReference>
<dbReference type="InterPro" id="IPR036603">
    <property type="entry name" value="RBP11-like"/>
</dbReference>
<dbReference type="InterPro" id="IPR022842">
    <property type="entry name" value="RNAP_Rpo3/Rpb3/RPAC1"/>
</dbReference>
<dbReference type="InterPro" id="IPR036643">
    <property type="entry name" value="RNApol_insert_sf"/>
</dbReference>
<dbReference type="InterPro" id="IPR050518">
    <property type="entry name" value="Rpo3/RPB3_RNA_Pol_subunit"/>
</dbReference>
<dbReference type="NCBIfam" id="NF001988">
    <property type="entry name" value="PRK00783.1"/>
    <property type="match status" value="1"/>
</dbReference>
<dbReference type="PANTHER" id="PTHR11800">
    <property type="entry name" value="DNA-DIRECTED RNA POLYMERASE"/>
    <property type="match status" value="1"/>
</dbReference>
<dbReference type="PANTHER" id="PTHR11800:SF2">
    <property type="entry name" value="DNA-DIRECTED RNA POLYMERASE II SUBUNIT RPB3"/>
    <property type="match status" value="1"/>
</dbReference>
<dbReference type="Pfam" id="PF01000">
    <property type="entry name" value="RNA_pol_A_bac"/>
    <property type="match status" value="1"/>
</dbReference>
<dbReference type="Pfam" id="PF01193">
    <property type="entry name" value="RNA_pol_L"/>
    <property type="match status" value="1"/>
</dbReference>
<dbReference type="SMART" id="SM00662">
    <property type="entry name" value="RPOLD"/>
    <property type="match status" value="1"/>
</dbReference>
<dbReference type="SUPFAM" id="SSF56553">
    <property type="entry name" value="Insert subdomain of RNA polymerase alpha subunit"/>
    <property type="match status" value="1"/>
</dbReference>
<dbReference type="SUPFAM" id="SSF55257">
    <property type="entry name" value="RBP11-like subunits of RNA polymerase"/>
    <property type="match status" value="1"/>
</dbReference>
<dbReference type="PROSITE" id="PS00446">
    <property type="entry name" value="RNA_POL_D_30KD"/>
    <property type="match status" value="1"/>
</dbReference>
<sequence>MVKIKILKKTEDSITFILEGVSVAFANALRRTILGEVPTFAVDEVEFYENDSALFDEIIAHRLAMIPLKTPTDRFELDALELDDYTVTLSLEAEGPGIVYSGDLKSDDPDVKPVTPDIPIVKLAKGQRLVFNAYAKLGRGKDHAKWQPGFTYYKYFTRVHISKKINGWEKLAKLAKKRGLPTKENEEEVIVETIKPFYIPKEFEEYEGKEIWEEIVPDTYVFVVETNGELPVEEIVKIALRILMRKADRFINELQRLAG</sequence>
<reference key="1">
    <citation type="journal article" date="1998" name="DNA Res.">
        <title>Complete sequence and gene organization of the genome of a hyper-thermophilic archaebacterium, Pyrococcus horikoshii OT3.</title>
        <authorList>
            <person name="Kawarabayasi Y."/>
            <person name="Sawada M."/>
            <person name="Horikawa H."/>
            <person name="Haikawa Y."/>
            <person name="Hino Y."/>
            <person name="Yamamoto S."/>
            <person name="Sekine M."/>
            <person name="Baba S."/>
            <person name="Kosugi H."/>
            <person name="Hosoyama A."/>
            <person name="Nagai Y."/>
            <person name="Sakai M."/>
            <person name="Ogura K."/>
            <person name="Otsuka R."/>
            <person name="Nakazawa H."/>
            <person name="Takamiya M."/>
            <person name="Ohfuku Y."/>
            <person name="Funahashi T."/>
            <person name="Tanaka T."/>
            <person name="Kudoh Y."/>
            <person name="Yamazaki J."/>
            <person name="Kushida N."/>
            <person name="Oguchi A."/>
            <person name="Aoki K."/>
            <person name="Yoshizawa T."/>
            <person name="Nakamura Y."/>
            <person name="Robb F.T."/>
            <person name="Horikoshi K."/>
            <person name="Masuchi Y."/>
            <person name="Shizuya H."/>
            <person name="Kikuchi H."/>
        </authorList>
    </citation>
    <scope>NUCLEOTIDE SEQUENCE [LARGE SCALE GENOMIC DNA]</scope>
    <source>
        <strain>ATCC 700860 / DSM 12428 / JCM 9974 / NBRC 100139 / OT-3</strain>
    </source>
</reference>
<proteinExistence type="inferred from homology"/>
<keyword id="KW-0963">Cytoplasm</keyword>
<keyword id="KW-0240">DNA-directed RNA polymerase</keyword>
<keyword id="KW-0548">Nucleotidyltransferase</keyword>
<keyword id="KW-0804">Transcription</keyword>
<keyword id="KW-0808">Transferase</keyword>